<name>ATPE_ROSS1</name>
<protein>
    <recommendedName>
        <fullName evidence="1">ATP synthase epsilon chain</fullName>
    </recommendedName>
    <alternativeName>
        <fullName evidence="1">ATP synthase F1 sector epsilon subunit</fullName>
    </alternativeName>
    <alternativeName>
        <fullName evidence="1">F-ATPase epsilon subunit</fullName>
    </alternativeName>
</protein>
<dbReference type="EMBL" id="CP000686">
    <property type="protein sequence ID" value="ABQ88935.1"/>
    <property type="molecule type" value="Genomic_DNA"/>
</dbReference>
<dbReference type="RefSeq" id="WP_011955292.1">
    <property type="nucleotide sequence ID" value="NC_009523.1"/>
</dbReference>
<dbReference type="SMR" id="A5UQN2"/>
<dbReference type="STRING" id="357808.RoseRS_0511"/>
<dbReference type="KEGG" id="rrs:RoseRS_0511"/>
<dbReference type="eggNOG" id="COG0355">
    <property type="taxonomic scope" value="Bacteria"/>
</dbReference>
<dbReference type="HOGENOM" id="CLU_084338_1_3_0"/>
<dbReference type="OrthoDB" id="9804110at2"/>
<dbReference type="Proteomes" id="UP000006554">
    <property type="component" value="Chromosome"/>
</dbReference>
<dbReference type="GO" id="GO:0005886">
    <property type="term" value="C:plasma membrane"/>
    <property type="evidence" value="ECO:0007669"/>
    <property type="project" value="UniProtKB-SubCell"/>
</dbReference>
<dbReference type="GO" id="GO:0045259">
    <property type="term" value="C:proton-transporting ATP synthase complex"/>
    <property type="evidence" value="ECO:0007669"/>
    <property type="project" value="UniProtKB-KW"/>
</dbReference>
<dbReference type="GO" id="GO:0005524">
    <property type="term" value="F:ATP binding"/>
    <property type="evidence" value="ECO:0007669"/>
    <property type="project" value="UniProtKB-UniRule"/>
</dbReference>
<dbReference type="GO" id="GO:0046933">
    <property type="term" value="F:proton-transporting ATP synthase activity, rotational mechanism"/>
    <property type="evidence" value="ECO:0007669"/>
    <property type="project" value="UniProtKB-UniRule"/>
</dbReference>
<dbReference type="CDD" id="cd12152">
    <property type="entry name" value="F1-ATPase_delta"/>
    <property type="match status" value="1"/>
</dbReference>
<dbReference type="Gene3D" id="1.20.5.440">
    <property type="entry name" value="ATP synthase delta/epsilon subunit, C-terminal domain"/>
    <property type="match status" value="1"/>
</dbReference>
<dbReference type="Gene3D" id="2.60.15.10">
    <property type="entry name" value="F0F1 ATP synthase delta/epsilon subunit, N-terminal"/>
    <property type="match status" value="1"/>
</dbReference>
<dbReference type="HAMAP" id="MF_00530">
    <property type="entry name" value="ATP_synth_epsil_bac"/>
    <property type="match status" value="1"/>
</dbReference>
<dbReference type="InterPro" id="IPR036794">
    <property type="entry name" value="ATP_F1_dsu/esu_C_sf"/>
</dbReference>
<dbReference type="InterPro" id="IPR001469">
    <property type="entry name" value="ATP_synth_F1_dsu/esu"/>
</dbReference>
<dbReference type="InterPro" id="IPR020546">
    <property type="entry name" value="ATP_synth_F1_dsu/esu_N"/>
</dbReference>
<dbReference type="InterPro" id="IPR020547">
    <property type="entry name" value="ATP_synth_F1_esu_C"/>
</dbReference>
<dbReference type="InterPro" id="IPR036771">
    <property type="entry name" value="ATPsynth_dsu/esu_N"/>
</dbReference>
<dbReference type="NCBIfam" id="TIGR01216">
    <property type="entry name" value="ATP_synt_epsi"/>
    <property type="match status" value="1"/>
</dbReference>
<dbReference type="NCBIfam" id="NF009980">
    <property type="entry name" value="PRK13446.1"/>
    <property type="match status" value="1"/>
</dbReference>
<dbReference type="NCBIfam" id="NF011322">
    <property type="entry name" value="PRK14735.1"/>
    <property type="match status" value="1"/>
</dbReference>
<dbReference type="PANTHER" id="PTHR13822">
    <property type="entry name" value="ATP SYNTHASE DELTA/EPSILON CHAIN"/>
    <property type="match status" value="1"/>
</dbReference>
<dbReference type="PANTHER" id="PTHR13822:SF10">
    <property type="entry name" value="ATP SYNTHASE EPSILON CHAIN, CHLOROPLASTIC"/>
    <property type="match status" value="1"/>
</dbReference>
<dbReference type="Pfam" id="PF00401">
    <property type="entry name" value="ATP-synt_DE"/>
    <property type="match status" value="1"/>
</dbReference>
<dbReference type="Pfam" id="PF02823">
    <property type="entry name" value="ATP-synt_DE_N"/>
    <property type="match status" value="1"/>
</dbReference>
<dbReference type="SUPFAM" id="SSF46604">
    <property type="entry name" value="Epsilon subunit of F1F0-ATP synthase C-terminal domain"/>
    <property type="match status" value="1"/>
</dbReference>
<dbReference type="SUPFAM" id="SSF51344">
    <property type="entry name" value="Epsilon subunit of F1F0-ATP synthase N-terminal domain"/>
    <property type="match status" value="1"/>
</dbReference>
<reference key="1">
    <citation type="submission" date="2007-04" db="EMBL/GenBank/DDBJ databases">
        <title>Complete sequence of Roseiflexus sp. RS-1.</title>
        <authorList>
            <consortium name="US DOE Joint Genome Institute"/>
            <person name="Copeland A."/>
            <person name="Lucas S."/>
            <person name="Lapidus A."/>
            <person name="Barry K."/>
            <person name="Detter J.C."/>
            <person name="Glavina del Rio T."/>
            <person name="Hammon N."/>
            <person name="Israni S."/>
            <person name="Dalin E."/>
            <person name="Tice H."/>
            <person name="Pitluck S."/>
            <person name="Chertkov O."/>
            <person name="Brettin T."/>
            <person name="Bruce D."/>
            <person name="Han C."/>
            <person name="Schmutz J."/>
            <person name="Larimer F."/>
            <person name="Land M."/>
            <person name="Hauser L."/>
            <person name="Kyrpides N."/>
            <person name="Mikhailova N."/>
            <person name="Bryant D.A."/>
            <person name="Richardson P."/>
        </authorList>
    </citation>
    <scope>NUCLEOTIDE SEQUENCE [LARGE SCALE GENOMIC DNA]</scope>
    <source>
        <strain>RS-1</strain>
    </source>
</reference>
<comment type="function">
    <text evidence="1">Produces ATP from ADP in the presence of a proton gradient across the membrane.</text>
</comment>
<comment type="subunit">
    <text evidence="1">F-type ATPases have 2 components, CF(1) - the catalytic core - and CF(0) - the membrane proton channel. CF(1) has five subunits: alpha(3), beta(3), gamma(1), delta(1), epsilon(1). CF(0) has three main subunits: a, b and c.</text>
</comment>
<comment type="subcellular location">
    <subcellularLocation>
        <location evidence="1">Cell membrane</location>
        <topology evidence="1">Peripheral membrane protein</topology>
    </subcellularLocation>
</comment>
<comment type="similarity">
    <text evidence="1">Belongs to the ATPase epsilon chain family.</text>
</comment>
<sequence length="139" mass="15354">MPIHLEIVTAERVVLSDDVDMINAPTKDGRVGILPRHAPLLTILEVGELDIVKDGVTTPFAISGGFMEVLPNRVTILADTAERADEIDEARAEAARRAAEQRIAERKSAQDLALAEAELRRALVQLKVAQLKKIRRERD</sequence>
<feature type="chain" id="PRO_1000146344" description="ATP synthase epsilon chain">
    <location>
        <begin position="1"/>
        <end position="139"/>
    </location>
</feature>
<proteinExistence type="inferred from homology"/>
<accession>A5UQN2</accession>
<gene>
    <name evidence="1" type="primary">atpC</name>
    <name type="ordered locus">RoseRS_0511</name>
</gene>
<evidence type="ECO:0000255" key="1">
    <source>
        <dbReference type="HAMAP-Rule" id="MF_00530"/>
    </source>
</evidence>
<keyword id="KW-0066">ATP synthesis</keyword>
<keyword id="KW-1003">Cell membrane</keyword>
<keyword id="KW-0139">CF(1)</keyword>
<keyword id="KW-0375">Hydrogen ion transport</keyword>
<keyword id="KW-0406">Ion transport</keyword>
<keyword id="KW-0472">Membrane</keyword>
<keyword id="KW-0813">Transport</keyword>
<organism>
    <name type="scientific">Roseiflexus sp. (strain RS-1)</name>
    <dbReference type="NCBI Taxonomy" id="357808"/>
    <lineage>
        <taxon>Bacteria</taxon>
        <taxon>Bacillati</taxon>
        <taxon>Chloroflexota</taxon>
        <taxon>Chloroflexia</taxon>
        <taxon>Chloroflexales</taxon>
        <taxon>Roseiflexineae</taxon>
        <taxon>Roseiflexaceae</taxon>
        <taxon>Roseiflexus</taxon>
    </lineage>
</organism>